<protein>
    <recommendedName>
        <fullName evidence="1">3'-5' ssDNA/RNA exonuclease TatD</fullName>
        <ecNumber evidence="1">3.1.11.-</ecNumber>
        <ecNumber evidence="1">3.1.13.-</ecNumber>
    </recommendedName>
    <alternativeName>
        <fullName evidence="1">DNase TatD</fullName>
    </alternativeName>
</protein>
<keyword id="KW-0963">Cytoplasm</keyword>
<keyword id="KW-0269">Exonuclease</keyword>
<keyword id="KW-0378">Hydrolase</keyword>
<keyword id="KW-0460">Magnesium</keyword>
<keyword id="KW-0479">Metal-binding</keyword>
<keyword id="KW-0540">Nuclease</keyword>
<keyword id="KW-1185">Reference proteome</keyword>
<accession>Q6DAQ1</accession>
<dbReference type="EC" id="3.1.11.-" evidence="1"/>
<dbReference type="EC" id="3.1.13.-" evidence="1"/>
<dbReference type="EMBL" id="BX950851">
    <property type="protein sequence ID" value="CAG73121.1"/>
    <property type="molecule type" value="Genomic_DNA"/>
</dbReference>
<dbReference type="RefSeq" id="WP_011091841.1">
    <property type="nucleotide sequence ID" value="NC_004547.2"/>
</dbReference>
<dbReference type="SMR" id="Q6DAQ1"/>
<dbReference type="STRING" id="218491.ECA0202"/>
<dbReference type="KEGG" id="eca:ECA0202"/>
<dbReference type="PATRIC" id="fig|218491.5.peg.201"/>
<dbReference type="eggNOG" id="COG0084">
    <property type="taxonomic scope" value="Bacteria"/>
</dbReference>
<dbReference type="HOGENOM" id="CLU_031506_1_2_6"/>
<dbReference type="OrthoDB" id="9810005at2"/>
<dbReference type="Proteomes" id="UP000007966">
    <property type="component" value="Chromosome"/>
</dbReference>
<dbReference type="GO" id="GO:0005737">
    <property type="term" value="C:cytoplasm"/>
    <property type="evidence" value="ECO:0007669"/>
    <property type="project" value="UniProtKB-SubCell"/>
</dbReference>
<dbReference type="GO" id="GO:0000175">
    <property type="term" value="F:3'-5'-RNA exonuclease activity"/>
    <property type="evidence" value="ECO:0007669"/>
    <property type="project" value="UniProtKB-UniRule"/>
</dbReference>
<dbReference type="GO" id="GO:0000287">
    <property type="term" value="F:magnesium ion binding"/>
    <property type="evidence" value="ECO:0007669"/>
    <property type="project" value="UniProtKB-UniRule"/>
</dbReference>
<dbReference type="GO" id="GO:0008310">
    <property type="term" value="F:single-stranded DNA 3'-5' DNA exonuclease activity"/>
    <property type="evidence" value="ECO:0007669"/>
    <property type="project" value="UniProtKB-UniRule"/>
</dbReference>
<dbReference type="CDD" id="cd01310">
    <property type="entry name" value="TatD_DNAse"/>
    <property type="match status" value="1"/>
</dbReference>
<dbReference type="FunFam" id="3.20.20.140:FF:000018">
    <property type="entry name" value="3'-5' ssDNA/RNA exonuclease TatD"/>
    <property type="match status" value="1"/>
</dbReference>
<dbReference type="Gene3D" id="3.20.20.140">
    <property type="entry name" value="Metal-dependent hydrolases"/>
    <property type="match status" value="1"/>
</dbReference>
<dbReference type="HAMAP" id="MF_00901">
    <property type="entry name" value="TatD_exonuclease"/>
    <property type="match status" value="1"/>
</dbReference>
<dbReference type="InterPro" id="IPR018228">
    <property type="entry name" value="DNase_TatD-rel_CS"/>
</dbReference>
<dbReference type="InterPro" id="IPR024918">
    <property type="entry name" value="Exonuc_TatD"/>
</dbReference>
<dbReference type="InterPro" id="IPR032466">
    <property type="entry name" value="Metal_Hydrolase"/>
</dbReference>
<dbReference type="InterPro" id="IPR001130">
    <property type="entry name" value="TatD-like"/>
</dbReference>
<dbReference type="InterPro" id="IPR050891">
    <property type="entry name" value="TatD-type_Hydrolase"/>
</dbReference>
<dbReference type="NCBIfam" id="NF007745">
    <property type="entry name" value="PRK10425.1"/>
    <property type="match status" value="1"/>
</dbReference>
<dbReference type="PANTHER" id="PTHR10060:SF15">
    <property type="entry name" value="DEOXYRIBONUCLEASE TATDN1"/>
    <property type="match status" value="1"/>
</dbReference>
<dbReference type="PANTHER" id="PTHR10060">
    <property type="entry name" value="TATD FAMILY DEOXYRIBONUCLEASE"/>
    <property type="match status" value="1"/>
</dbReference>
<dbReference type="Pfam" id="PF01026">
    <property type="entry name" value="TatD_DNase"/>
    <property type="match status" value="1"/>
</dbReference>
<dbReference type="PIRSF" id="PIRSF005902">
    <property type="entry name" value="DNase_TatD"/>
    <property type="match status" value="1"/>
</dbReference>
<dbReference type="SUPFAM" id="SSF51556">
    <property type="entry name" value="Metallo-dependent hydrolases"/>
    <property type="match status" value="1"/>
</dbReference>
<dbReference type="PROSITE" id="PS01091">
    <property type="entry name" value="TATD_3"/>
    <property type="match status" value="1"/>
</dbReference>
<reference key="1">
    <citation type="journal article" date="2004" name="Proc. Natl. Acad. Sci. U.S.A.">
        <title>Genome sequence of the enterobacterial phytopathogen Erwinia carotovora subsp. atroseptica and characterization of virulence factors.</title>
        <authorList>
            <person name="Bell K.S."/>
            <person name="Sebaihia M."/>
            <person name="Pritchard L."/>
            <person name="Holden M.T.G."/>
            <person name="Hyman L.J."/>
            <person name="Holeva M.C."/>
            <person name="Thomson N.R."/>
            <person name="Bentley S.D."/>
            <person name="Churcher L.J.C."/>
            <person name="Mungall K."/>
            <person name="Atkin R."/>
            <person name="Bason N."/>
            <person name="Brooks K."/>
            <person name="Chillingworth T."/>
            <person name="Clark K."/>
            <person name="Doggett J."/>
            <person name="Fraser A."/>
            <person name="Hance Z."/>
            <person name="Hauser H."/>
            <person name="Jagels K."/>
            <person name="Moule S."/>
            <person name="Norbertczak H."/>
            <person name="Ormond D."/>
            <person name="Price C."/>
            <person name="Quail M.A."/>
            <person name="Sanders M."/>
            <person name="Walker D."/>
            <person name="Whitehead S."/>
            <person name="Salmond G.P.C."/>
            <person name="Birch P.R.J."/>
            <person name="Parkhill J."/>
            <person name="Toth I.K."/>
        </authorList>
    </citation>
    <scope>NUCLEOTIDE SEQUENCE [LARGE SCALE GENOMIC DNA]</scope>
    <source>
        <strain>SCRI 1043 / ATCC BAA-672</strain>
    </source>
</reference>
<gene>
    <name evidence="1" type="primary">tatD</name>
    <name type="ordered locus">ECA0202</name>
</gene>
<comment type="function">
    <text evidence="1">3'-5' exonuclease that prefers single-stranded DNA and RNA. May play a role in the H(2)O(2)-induced DNA damage repair.</text>
</comment>
<comment type="cofactor">
    <cofactor evidence="1">
        <name>Mg(2+)</name>
        <dbReference type="ChEBI" id="CHEBI:18420"/>
    </cofactor>
</comment>
<comment type="subunit">
    <text evidence="1">Monomer.</text>
</comment>
<comment type="subcellular location">
    <subcellularLocation>
        <location evidence="1">Cytoplasm</location>
    </subcellularLocation>
</comment>
<comment type="similarity">
    <text evidence="1">Belongs to the metallo-dependent hydrolases superfamily. TatD-type hydrolase family. TatD subfamily.</text>
</comment>
<proteinExistence type="inferred from homology"/>
<sequence length="260" mass="29032">MFDIGVNLTSSQFEKDREQVVIRAKLAGVSGILITGTNAQESHQAMLLAQAYPDYCWSTAGVHPHDASQWNDAIAEQLHQMANAACVVSIGECGLDFNRNFSTPEEQEQAFSAQLAIAAELSMPVFLHCRDAHPRFISLLTPWLSQLPAAVVHCFTGNRHELDECLAAGLMIGITGWVCDERRGLELRALLPHIPADRLLVETDAPYLLPRDLRPKPASRRNEPCYLPHIIRQIAEWRGEDATWLGQTTDENARRVFRLA</sequence>
<name>TATD_PECAS</name>
<organism>
    <name type="scientific">Pectobacterium atrosepticum (strain SCRI 1043 / ATCC BAA-672)</name>
    <name type="common">Erwinia carotovora subsp. atroseptica</name>
    <dbReference type="NCBI Taxonomy" id="218491"/>
    <lineage>
        <taxon>Bacteria</taxon>
        <taxon>Pseudomonadati</taxon>
        <taxon>Pseudomonadota</taxon>
        <taxon>Gammaproteobacteria</taxon>
        <taxon>Enterobacterales</taxon>
        <taxon>Pectobacteriaceae</taxon>
        <taxon>Pectobacterium</taxon>
    </lineage>
</organism>
<feature type="chain" id="PRO_0000412741" description="3'-5' ssDNA/RNA exonuclease TatD">
    <location>
        <begin position="1"/>
        <end position="260"/>
    </location>
</feature>
<feature type="binding site" evidence="1">
    <location>
        <position position="92"/>
    </location>
    <ligand>
        <name>a divalent metal cation</name>
        <dbReference type="ChEBI" id="CHEBI:60240"/>
    </ligand>
</feature>
<feature type="binding site" evidence="1">
    <location>
        <position position="128"/>
    </location>
    <ligand>
        <name>a divalent metal cation</name>
        <dbReference type="ChEBI" id="CHEBI:60240"/>
    </ligand>
</feature>
<feature type="binding site" evidence="1">
    <location>
        <position position="153"/>
    </location>
    <ligand>
        <name>a divalent metal cation</name>
        <dbReference type="ChEBI" id="CHEBI:60240"/>
    </ligand>
</feature>
<evidence type="ECO:0000255" key="1">
    <source>
        <dbReference type="HAMAP-Rule" id="MF_00901"/>
    </source>
</evidence>